<protein>
    <recommendedName>
        <fullName evidence="1">L-lactate dehydrogenase</fullName>
        <shortName evidence="1">L-LDH</shortName>
        <ecNumber evidence="1">1.1.1.27</ecNumber>
    </recommendedName>
</protein>
<name>LDH_STRSY</name>
<accession>A4VVA3</accession>
<evidence type="ECO:0000255" key="1">
    <source>
        <dbReference type="HAMAP-Rule" id="MF_00488"/>
    </source>
</evidence>
<keyword id="KW-0021">Allosteric enzyme</keyword>
<keyword id="KW-0963">Cytoplasm</keyword>
<keyword id="KW-0520">NAD</keyword>
<keyword id="KW-0560">Oxidoreductase</keyword>
<keyword id="KW-0597">Phosphoprotein</keyword>
<sequence>MTATKQHKKVILVGDGAVGSAYAYALVNQGIGQELGIIDINKDRTQGDAEDLSHALAFTFPKKIYSAEYSDAHDADLVVLTAGLPQKPGETRLELVEKNLRINQQIVTEIVNSGFNGIFLVAANPVDVLTYSTWKFSGFPKERVIGSGTSLDSARFRQALAEKIGIDARSVHAYIMGEHGDSEFAVWSHANVAGVKLYDWLQDNRDIDEQGLVDLFVSVRDAAYSIINKKGATYYGIGVALARITKAIFDDENAVLPLSVYQAGQYEGVEDVFIGQPAIIGAHGIVRPVNIPLSDAELQKMQASAKQLKDIIDDAFANPEIAAGVKN</sequence>
<comment type="function">
    <text evidence="1">Catalyzes the conversion of lactate to pyruvate.</text>
</comment>
<comment type="catalytic activity">
    <reaction evidence="1">
        <text>(S)-lactate + NAD(+) = pyruvate + NADH + H(+)</text>
        <dbReference type="Rhea" id="RHEA:23444"/>
        <dbReference type="ChEBI" id="CHEBI:15361"/>
        <dbReference type="ChEBI" id="CHEBI:15378"/>
        <dbReference type="ChEBI" id="CHEBI:16651"/>
        <dbReference type="ChEBI" id="CHEBI:57540"/>
        <dbReference type="ChEBI" id="CHEBI:57945"/>
        <dbReference type="EC" id="1.1.1.27"/>
    </reaction>
</comment>
<comment type="activity regulation">
    <text evidence="1">Allosterically activated by fructose 1,6-bisphosphate (FBP).</text>
</comment>
<comment type="pathway">
    <text evidence="1">Fermentation; pyruvate fermentation to lactate; (S)-lactate from pyruvate: step 1/1.</text>
</comment>
<comment type="subunit">
    <text evidence="1">Homotetramer.</text>
</comment>
<comment type="subcellular location">
    <subcellularLocation>
        <location evidence="1">Cytoplasm</location>
    </subcellularLocation>
</comment>
<comment type="similarity">
    <text evidence="1">Belongs to the LDH/MDH superfamily. LDH family.</text>
</comment>
<dbReference type="EC" id="1.1.1.27" evidence="1"/>
<dbReference type="EMBL" id="CP000407">
    <property type="protein sequence ID" value="ABP90042.1"/>
    <property type="molecule type" value="Genomic_DNA"/>
</dbReference>
<dbReference type="SMR" id="A4VVA3"/>
<dbReference type="STRING" id="391295.SSU05_1076"/>
<dbReference type="KEGG" id="ssu:SSU05_1076"/>
<dbReference type="eggNOG" id="COG0039">
    <property type="taxonomic scope" value="Bacteria"/>
</dbReference>
<dbReference type="HOGENOM" id="CLU_045401_1_1_9"/>
<dbReference type="UniPathway" id="UPA00554">
    <property type="reaction ID" value="UER00611"/>
</dbReference>
<dbReference type="GO" id="GO:0005737">
    <property type="term" value="C:cytoplasm"/>
    <property type="evidence" value="ECO:0007669"/>
    <property type="project" value="UniProtKB-SubCell"/>
</dbReference>
<dbReference type="GO" id="GO:0004459">
    <property type="term" value="F:L-lactate dehydrogenase activity"/>
    <property type="evidence" value="ECO:0007669"/>
    <property type="project" value="UniProtKB-UniRule"/>
</dbReference>
<dbReference type="GO" id="GO:0006096">
    <property type="term" value="P:glycolytic process"/>
    <property type="evidence" value="ECO:0007669"/>
    <property type="project" value="UniProtKB-UniRule"/>
</dbReference>
<dbReference type="GO" id="GO:0006089">
    <property type="term" value="P:lactate metabolic process"/>
    <property type="evidence" value="ECO:0007669"/>
    <property type="project" value="TreeGrafter"/>
</dbReference>
<dbReference type="CDD" id="cd05291">
    <property type="entry name" value="HicDH_like"/>
    <property type="match status" value="1"/>
</dbReference>
<dbReference type="FunFam" id="3.40.50.720:FF:000018">
    <property type="entry name" value="Malate dehydrogenase"/>
    <property type="match status" value="1"/>
</dbReference>
<dbReference type="Gene3D" id="3.90.110.10">
    <property type="entry name" value="Lactate dehydrogenase/glycoside hydrolase, family 4, C-terminal"/>
    <property type="match status" value="1"/>
</dbReference>
<dbReference type="Gene3D" id="3.40.50.720">
    <property type="entry name" value="NAD(P)-binding Rossmann-like Domain"/>
    <property type="match status" value="1"/>
</dbReference>
<dbReference type="HAMAP" id="MF_00488">
    <property type="entry name" value="Lactate_dehydrog"/>
    <property type="match status" value="1"/>
</dbReference>
<dbReference type="InterPro" id="IPR001557">
    <property type="entry name" value="L-lactate/malate_DH"/>
</dbReference>
<dbReference type="InterPro" id="IPR011304">
    <property type="entry name" value="L-lactate_DH"/>
</dbReference>
<dbReference type="InterPro" id="IPR018177">
    <property type="entry name" value="L-lactate_DH_AS"/>
</dbReference>
<dbReference type="InterPro" id="IPR022383">
    <property type="entry name" value="Lactate/malate_DH_C"/>
</dbReference>
<dbReference type="InterPro" id="IPR001236">
    <property type="entry name" value="Lactate/malate_DH_N"/>
</dbReference>
<dbReference type="InterPro" id="IPR015955">
    <property type="entry name" value="Lactate_DH/Glyco_Ohase_4_C"/>
</dbReference>
<dbReference type="InterPro" id="IPR036291">
    <property type="entry name" value="NAD(P)-bd_dom_sf"/>
</dbReference>
<dbReference type="NCBIfam" id="TIGR01771">
    <property type="entry name" value="L-LDH-NAD"/>
    <property type="match status" value="1"/>
</dbReference>
<dbReference type="NCBIfam" id="NF000824">
    <property type="entry name" value="PRK00066.1"/>
    <property type="match status" value="1"/>
</dbReference>
<dbReference type="PANTHER" id="PTHR43128">
    <property type="entry name" value="L-2-HYDROXYCARBOXYLATE DEHYDROGENASE (NAD(P)(+))"/>
    <property type="match status" value="1"/>
</dbReference>
<dbReference type="PANTHER" id="PTHR43128:SF16">
    <property type="entry name" value="L-LACTATE DEHYDROGENASE"/>
    <property type="match status" value="1"/>
</dbReference>
<dbReference type="Pfam" id="PF02866">
    <property type="entry name" value="Ldh_1_C"/>
    <property type="match status" value="1"/>
</dbReference>
<dbReference type="Pfam" id="PF00056">
    <property type="entry name" value="Ldh_1_N"/>
    <property type="match status" value="1"/>
</dbReference>
<dbReference type="PIRSF" id="PIRSF000102">
    <property type="entry name" value="Lac_mal_DH"/>
    <property type="match status" value="1"/>
</dbReference>
<dbReference type="PRINTS" id="PR00086">
    <property type="entry name" value="LLDHDRGNASE"/>
</dbReference>
<dbReference type="SUPFAM" id="SSF56327">
    <property type="entry name" value="LDH C-terminal domain-like"/>
    <property type="match status" value="1"/>
</dbReference>
<dbReference type="SUPFAM" id="SSF51735">
    <property type="entry name" value="NAD(P)-binding Rossmann-fold domains"/>
    <property type="match status" value="1"/>
</dbReference>
<dbReference type="PROSITE" id="PS00064">
    <property type="entry name" value="L_LDH"/>
    <property type="match status" value="1"/>
</dbReference>
<gene>
    <name evidence="1" type="primary">ldh</name>
    <name type="ordered locus">SSU05_1076</name>
</gene>
<reference key="1">
    <citation type="journal article" date="2007" name="PLoS ONE">
        <title>A glimpse of streptococcal toxic shock syndrome from comparative genomics of S. suis 2 Chinese isolates.</title>
        <authorList>
            <person name="Chen C."/>
            <person name="Tang J."/>
            <person name="Dong W."/>
            <person name="Wang C."/>
            <person name="Feng Y."/>
            <person name="Wang J."/>
            <person name="Zheng F."/>
            <person name="Pan X."/>
            <person name="Liu D."/>
            <person name="Li M."/>
            <person name="Song Y."/>
            <person name="Zhu X."/>
            <person name="Sun H."/>
            <person name="Feng T."/>
            <person name="Guo Z."/>
            <person name="Ju A."/>
            <person name="Ge J."/>
            <person name="Dong Y."/>
            <person name="Sun W."/>
            <person name="Jiang Y."/>
            <person name="Wang J."/>
            <person name="Yan J."/>
            <person name="Yang H."/>
            <person name="Wang X."/>
            <person name="Gao G.F."/>
            <person name="Yang R."/>
            <person name="Wang J."/>
            <person name="Yu J."/>
        </authorList>
    </citation>
    <scope>NUCLEOTIDE SEQUENCE [LARGE SCALE GENOMIC DNA]</scope>
    <source>
        <strain>05ZYH33</strain>
    </source>
</reference>
<feature type="chain" id="PRO_1000026516" description="L-lactate dehydrogenase">
    <location>
        <begin position="1"/>
        <end position="327"/>
    </location>
</feature>
<feature type="active site" description="Proton acceptor" evidence="1">
    <location>
        <position position="179"/>
    </location>
</feature>
<feature type="binding site" evidence="1">
    <location>
        <position position="18"/>
    </location>
    <ligand>
        <name>NAD(+)</name>
        <dbReference type="ChEBI" id="CHEBI:57540"/>
    </ligand>
</feature>
<feature type="binding site" evidence="1">
    <location>
        <position position="39"/>
    </location>
    <ligand>
        <name>NAD(+)</name>
        <dbReference type="ChEBI" id="CHEBI:57540"/>
    </ligand>
</feature>
<feature type="binding site" evidence="1">
    <location>
        <position position="44"/>
    </location>
    <ligand>
        <name>NAD(+)</name>
        <dbReference type="ChEBI" id="CHEBI:57540"/>
    </ligand>
</feature>
<feature type="binding site" evidence="1">
    <location>
        <position position="69"/>
    </location>
    <ligand>
        <name>NAD(+)</name>
        <dbReference type="ChEBI" id="CHEBI:57540"/>
    </ligand>
</feature>
<feature type="binding site" evidence="1">
    <location>
        <begin position="83"/>
        <end position="84"/>
    </location>
    <ligand>
        <name>NAD(+)</name>
        <dbReference type="ChEBI" id="CHEBI:57540"/>
    </ligand>
</feature>
<feature type="binding site" evidence="1">
    <location>
        <position position="86"/>
    </location>
    <ligand>
        <name>substrate</name>
    </ligand>
</feature>
<feature type="binding site" evidence="1">
    <location>
        <position position="92"/>
    </location>
    <ligand>
        <name>substrate</name>
    </ligand>
</feature>
<feature type="binding site" evidence="1">
    <location>
        <begin position="122"/>
        <end position="124"/>
    </location>
    <ligand>
        <name>NAD(+)</name>
        <dbReference type="ChEBI" id="CHEBI:57540"/>
    </ligand>
</feature>
<feature type="binding site" evidence="1">
    <location>
        <begin position="124"/>
        <end position="127"/>
    </location>
    <ligand>
        <name>substrate</name>
    </ligand>
</feature>
<feature type="binding site" evidence="1">
    <location>
        <position position="147"/>
    </location>
    <ligand>
        <name>NAD(+)</name>
        <dbReference type="ChEBI" id="CHEBI:57540"/>
    </ligand>
</feature>
<feature type="binding site" evidence="1">
    <location>
        <begin position="152"/>
        <end position="155"/>
    </location>
    <ligand>
        <name>substrate</name>
    </ligand>
</feature>
<feature type="binding site" evidence="1">
    <location>
        <position position="157"/>
    </location>
    <ligand>
        <name>beta-D-fructose 1,6-bisphosphate</name>
        <dbReference type="ChEBI" id="CHEBI:32966"/>
        <note>allosteric activator</note>
    </ligand>
</feature>
<feature type="binding site" evidence="1">
    <location>
        <position position="172"/>
    </location>
    <ligand>
        <name>beta-D-fructose 1,6-bisphosphate</name>
        <dbReference type="ChEBI" id="CHEBI:32966"/>
        <note>allosteric activator</note>
    </ligand>
</feature>
<feature type="binding site" evidence="1">
    <location>
        <position position="233"/>
    </location>
    <ligand>
        <name>substrate</name>
    </ligand>
</feature>
<feature type="modified residue" description="Phosphotyrosine" evidence="1">
    <location>
        <position position="224"/>
    </location>
</feature>
<organism>
    <name type="scientific">Streptococcus suis (strain 05ZYH33)</name>
    <dbReference type="NCBI Taxonomy" id="391295"/>
    <lineage>
        <taxon>Bacteria</taxon>
        <taxon>Bacillati</taxon>
        <taxon>Bacillota</taxon>
        <taxon>Bacilli</taxon>
        <taxon>Lactobacillales</taxon>
        <taxon>Streptococcaceae</taxon>
        <taxon>Streptococcus</taxon>
    </lineage>
</organism>
<proteinExistence type="inferred from homology"/>